<reference key="1">
    <citation type="journal article" date="2008" name="Proc. Natl. Acad. Sci. U.S.A.">
        <title>Niche adaptation and genome expansion in the chlorophyll d-producing cyanobacterium Acaryochloris marina.</title>
        <authorList>
            <person name="Swingley W.D."/>
            <person name="Chen M."/>
            <person name="Cheung P.C."/>
            <person name="Conrad A.L."/>
            <person name="Dejesa L.C."/>
            <person name="Hao J."/>
            <person name="Honchak B.M."/>
            <person name="Karbach L.E."/>
            <person name="Kurdoglu A."/>
            <person name="Lahiri S."/>
            <person name="Mastrian S.D."/>
            <person name="Miyashita H."/>
            <person name="Page L."/>
            <person name="Ramakrishna P."/>
            <person name="Satoh S."/>
            <person name="Sattley W.M."/>
            <person name="Shimada Y."/>
            <person name="Taylor H.L."/>
            <person name="Tomo T."/>
            <person name="Tsuchiya T."/>
            <person name="Wang Z.T."/>
            <person name="Raymond J."/>
            <person name="Mimuro M."/>
            <person name="Blankenship R.E."/>
            <person name="Touchman J.W."/>
        </authorList>
    </citation>
    <scope>NUCLEOTIDE SEQUENCE [LARGE SCALE GENOMIC DNA]</scope>
    <source>
        <strain>MBIC 11017</strain>
    </source>
</reference>
<sequence length="371" mass="39423">MSQTLVLKIGTSSLTNPDTGHLALATIASLVEVLSQLRQEGNQVILVSSGAVGIGCARLGLAERPKAIALKQAVAAVGQGRLMRIYDDFFTSLQQPIAQVLLTRGDLADRSRYINASNTLQELLKLGVIPIVNENDTVAVDELLRFGDNDTLSALVAGLVQADWLFILTDVDRLYSADPRIQPDAQPIVTVERMEELAALNVNAGAQGSQWGTGGMATKISAAAIATNAGVRTVITQGKTPENIPRILAGESLGTQFQPHPRPHNARKHWIAHALVPTGKLILDDGAAKAITTLGKSLLAAGITAVEGEFQSQEAVCFYDSAGVEIARGLVNYSSDELQRIQGRQSEDIPQVLGYAGAETVVHRDNLVITG</sequence>
<dbReference type="EC" id="2.7.2.11" evidence="1"/>
<dbReference type="EMBL" id="CP000828">
    <property type="protein sequence ID" value="ABW29650.1"/>
    <property type="molecule type" value="Genomic_DNA"/>
</dbReference>
<dbReference type="RefSeq" id="WP_012164949.1">
    <property type="nucleotide sequence ID" value="NC_009925.1"/>
</dbReference>
<dbReference type="SMR" id="B0C1B5"/>
<dbReference type="STRING" id="329726.AM1_4676"/>
<dbReference type="KEGG" id="amr:AM1_4676"/>
<dbReference type="eggNOG" id="COG0263">
    <property type="taxonomic scope" value="Bacteria"/>
</dbReference>
<dbReference type="HOGENOM" id="CLU_025400_2_0_3"/>
<dbReference type="OrthoDB" id="9804434at2"/>
<dbReference type="UniPathway" id="UPA00098">
    <property type="reaction ID" value="UER00359"/>
</dbReference>
<dbReference type="Proteomes" id="UP000000268">
    <property type="component" value="Chromosome"/>
</dbReference>
<dbReference type="GO" id="GO:0005829">
    <property type="term" value="C:cytosol"/>
    <property type="evidence" value="ECO:0007669"/>
    <property type="project" value="TreeGrafter"/>
</dbReference>
<dbReference type="GO" id="GO:0005524">
    <property type="term" value="F:ATP binding"/>
    <property type="evidence" value="ECO:0007669"/>
    <property type="project" value="UniProtKB-KW"/>
</dbReference>
<dbReference type="GO" id="GO:0004349">
    <property type="term" value="F:glutamate 5-kinase activity"/>
    <property type="evidence" value="ECO:0007669"/>
    <property type="project" value="UniProtKB-UniRule"/>
</dbReference>
<dbReference type="GO" id="GO:0003723">
    <property type="term" value="F:RNA binding"/>
    <property type="evidence" value="ECO:0007669"/>
    <property type="project" value="InterPro"/>
</dbReference>
<dbReference type="GO" id="GO:0055129">
    <property type="term" value="P:L-proline biosynthetic process"/>
    <property type="evidence" value="ECO:0007669"/>
    <property type="project" value="UniProtKB-UniRule"/>
</dbReference>
<dbReference type="CDD" id="cd04242">
    <property type="entry name" value="AAK_G5K_ProB"/>
    <property type="match status" value="1"/>
</dbReference>
<dbReference type="CDD" id="cd21157">
    <property type="entry name" value="PUA_G5K"/>
    <property type="match status" value="1"/>
</dbReference>
<dbReference type="FunFam" id="2.30.130.10:FF:000007">
    <property type="entry name" value="Glutamate 5-kinase"/>
    <property type="match status" value="1"/>
</dbReference>
<dbReference type="FunFam" id="3.40.1160.10:FF:000018">
    <property type="entry name" value="Glutamate 5-kinase"/>
    <property type="match status" value="1"/>
</dbReference>
<dbReference type="Gene3D" id="3.40.1160.10">
    <property type="entry name" value="Acetylglutamate kinase-like"/>
    <property type="match status" value="1"/>
</dbReference>
<dbReference type="Gene3D" id="2.30.130.10">
    <property type="entry name" value="PUA domain"/>
    <property type="match status" value="1"/>
</dbReference>
<dbReference type="HAMAP" id="MF_00456">
    <property type="entry name" value="ProB"/>
    <property type="match status" value="1"/>
</dbReference>
<dbReference type="InterPro" id="IPR036393">
    <property type="entry name" value="AceGlu_kinase-like_sf"/>
</dbReference>
<dbReference type="InterPro" id="IPR001048">
    <property type="entry name" value="Asp/Glu/Uridylate_kinase"/>
</dbReference>
<dbReference type="InterPro" id="IPR041739">
    <property type="entry name" value="G5K_ProB"/>
</dbReference>
<dbReference type="InterPro" id="IPR001057">
    <property type="entry name" value="Glu/AcGlu_kinase"/>
</dbReference>
<dbReference type="InterPro" id="IPR011529">
    <property type="entry name" value="Glu_5kinase"/>
</dbReference>
<dbReference type="InterPro" id="IPR005715">
    <property type="entry name" value="Glu_5kinase/COase_Synthase"/>
</dbReference>
<dbReference type="InterPro" id="IPR019797">
    <property type="entry name" value="Glutamate_5-kinase_CS"/>
</dbReference>
<dbReference type="InterPro" id="IPR002478">
    <property type="entry name" value="PUA"/>
</dbReference>
<dbReference type="InterPro" id="IPR015947">
    <property type="entry name" value="PUA-like_sf"/>
</dbReference>
<dbReference type="InterPro" id="IPR036974">
    <property type="entry name" value="PUA_sf"/>
</dbReference>
<dbReference type="NCBIfam" id="TIGR01027">
    <property type="entry name" value="proB"/>
    <property type="match status" value="1"/>
</dbReference>
<dbReference type="PANTHER" id="PTHR43654">
    <property type="entry name" value="GLUTAMATE 5-KINASE"/>
    <property type="match status" value="1"/>
</dbReference>
<dbReference type="PANTHER" id="PTHR43654:SF3">
    <property type="entry name" value="GLUTAMATE 5-KINASE"/>
    <property type="match status" value="1"/>
</dbReference>
<dbReference type="Pfam" id="PF00696">
    <property type="entry name" value="AA_kinase"/>
    <property type="match status" value="1"/>
</dbReference>
<dbReference type="Pfam" id="PF01472">
    <property type="entry name" value="PUA"/>
    <property type="match status" value="1"/>
</dbReference>
<dbReference type="PIRSF" id="PIRSF000729">
    <property type="entry name" value="GK"/>
    <property type="match status" value="1"/>
</dbReference>
<dbReference type="PRINTS" id="PR00474">
    <property type="entry name" value="GLU5KINASE"/>
</dbReference>
<dbReference type="SMART" id="SM00359">
    <property type="entry name" value="PUA"/>
    <property type="match status" value="1"/>
</dbReference>
<dbReference type="SUPFAM" id="SSF53633">
    <property type="entry name" value="Carbamate kinase-like"/>
    <property type="match status" value="1"/>
</dbReference>
<dbReference type="SUPFAM" id="SSF88697">
    <property type="entry name" value="PUA domain-like"/>
    <property type="match status" value="1"/>
</dbReference>
<dbReference type="PROSITE" id="PS00902">
    <property type="entry name" value="GLUTAMATE_5_KINASE"/>
    <property type="match status" value="1"/>
</dbReference>
<dbReference type="PROSITE" id="PS50890">
    <property type="entry name" value="PUA"/>
    <property type="match status" value="1"/>
</dbReference>
<evidence type="ECO:0000255" key="1">
    <source>
        <dbReference type="HAMAP-Rule" id="MF_00456"/>
    </source>
</evidence>
<organism>
    <name type="scientific">Acaryochloris marina (strain MBIC 11017)</name>
    <dbReference type="NCBI Taxonomy" id="329726"/>
    <lineage>
        <taxon>Bacteria</taxon>
        <taxon>Bacillati</taxon>
        <taxon>Cyanobacteriota</taxon>
        <taxon>Cyanophyceae</taxon>
        <taxon>Acaryochloridales</taxon>
        <taxon>Acaryochloridaceae</taxon>
        <taxon>Acaryochloris</taxon>
    </lineage>
</organism>
<comment type="function">
    <text evidence="1">Catalyzes the transfer of a phosphate group to glutamate to form L-glutamate 5-phosphate.</text>
</comment>
<comment type="catalytic activity">
    <reaction evidence="1">
        <text>L-glutamate + ATP = L-glutamyl 5-phosphate + ADP</text>
        <dbReference type="Rhea" id="RHEA:14877"/>
        <dbReference type="ChEBI" id="CHEBI:29985"/>
        <dbReference type="ChEBI" id="CHEBI:30616"/>
        <dbReference type="ChEBI" id="CHEBI:58274"/>
        <dbReference type="ChEBI" id="CHEBI:456216"/>
        <dbReference type="EC" id="2.7.2.11"/>
    </reaction>
</comment>
<comment type="pathway">
    <text evidence="1">Amino-acid biosynthesis; L-proline biosynthesis; L-glutamate 5-semialdehyde from L-glutamate: step 1/2.</text>
</comment>
<comment type="subcellular location">
    <subcellularLocation>
        <location evidence="1">Cytoplasm</location>
    </subcellularLocation>
</comment>
<comment type="similarity">
    <text evidence="1">Belongs to the glutamate 5-kinase family.</text>
</comment>
<gene>
    <name evidence="1" type="primary">proB</name>
    <name type="ordered locus">AM1_4676</name>
</gene>
<proteinExistence type="inferred from homology"/>
<name>PROB_ACAM1</name>
<protein>
    <recommendedName>
        <fullName evidence="1">Glutamate 5-kinase</fullName>
        <ecNumber evidence="1">2.7.2.11</ecNumber>
    </recommendedName>
    <alternativeName>
        <fullName evidence="1">Gamma-glutamyl kinase</fullName>
        <shortName evidence="1">GK</shortName>
    </alternativeName>
</protein>
<keyword id="KW-0028">Amino-acid biosynthesis</keyword>
<keyword id="KW-0067">ATP-binding</keyword>
<keyword id="KW-0963">Cytoplasm</keyword>
<keyword id="KW-0418">Kinase</keyword>
<keyword id="KW-0547">Nucleotide-binding</keyword>
<keyword id="KW-0641">Proline biosynthesis</keyword>
<keyword id="KW-1185">Reference proteome</keyword>
<keyword id="KW-0808">Transferase</keyword>
<feature type="chain" id="PRO_1000081034" description="Glutamate 5-kinase">
    <location>
        <begin position="1"/>
        <end position="371"/>
    </location>
</feature>
<feature type="domain" description="PUA" evidence="1">
    <location>
        <begin position="278"/>
        <end position="356"/>
    </location>
</feature>
<feature type="binding site" evidence="1">
    <location>
        <position position="8"/>
    </location>
    <ligand>
        <name>ATP</name>
        <dbReference type="ChEBI" id="CHEBI:30616"/>
    </ligand>
</feature>
<feature type="binding site" evidence="1">
    <location>
        <position position="49"/>
    </location>
    <ligand>
        <name>substrate</name>
    </ligand>
</feature>
<feature type="binding site" evidence="1">
    <location>
        <position position="136"/>
    </location>
    <ligand>
        <name>substrate</name>
    </ligand>
</feature>
<feature type="binding site" evidence="1">
    <location>
        <position position="149"/>
    </location>
    <ligand>
        <name>substrate</name>
    </ligand>
</feature>
<feature type="binding site" evidence="1">
    <location>
        <begin position="169"/>
        <end position="170"/>
    </location>
    <ligand>
        <name>ATP</name>
        <dbReference type="ChEBI" id="CHEBI:30616"/>
    </ligand>
</feature>
<feature type="binding site" evidence="1">
    <location>
        <begin position="213"/>
        <end position="219"/>
    </location>
    <ligand>
        <name>ATP</name>
        <dbReference type="ChEBI" id="CHEBI:30616"/>
    </ligand>
</feature>
<accession>B0C1B5</accession>